<dbReference type="EC" id="3.5.4.19" evidence="1"/>
<dbReference type="EMBL" id="CP000031">
    <property type="protein sequence ID" value="AAV94969.1"/>
    <property type="molecule type" value="Genomic_DNA"/>
</dbReference>
<dbReference type="RefSeq" id="WP_011047419.1">
    <property type="nucleotide sequence ID" value="NC_003911.12"/>
</dbReference>
<dbReference type="SMR" id="Q5LST2"/>
<dbReference type="STRING" id="246200.SPO1684"/>
<dbReference type="PaxDb" id="246200-SPO1684"/>
<dbReference type="KEGG" id="sil:SPO1684"/>
<dbReference type="eggNOG" id="COG0139">
    <property type="taxonomic scope" value="Bacteria"/>
</dbReference>
<dbReference type="HOGENOM" id="CLU_048577_5_2_5"/>
<dbReference type="OrthoDB" id="9795769at2"/>
<dbReference type="UniPathway" id="UPA00031">
    <property type="reaction ID" value="UER00008"/>
</dbReference>
<dbReference type="Proteomes" id="UP000001023">
    <property type="component" value="Chromosome"/>
</dbReference>
<dbReference type="GO" id="GO:0005737">
    <property type="term" value="C:cytoplasm"/>
    <property type="evidence" value="ECO:0007669"/>
    <property type="project" value="UniProtKB-SubCell"/>
</dbReference>
<dbReference type="GO" id="GO:0000287">
    <property type="term" value="F:magnesium ion binding"/>
    <property type="evidence" value="ECO:0007669"/>
    <property type="project" value="UniProtKB-UniRule"/>
</dbReference>
<dbReference type="GO" id="GO:0004635">
    <property type="term" value="F:phosphoribosyl-AMP cyclohydrolase activity"/>
    <property type="evidence" value="ECO:0007669"/>
    <property type="project" value="UniProtKB-UniRule"/>
</dbReference>
<dbReference type="GO" id="GO:0008270">
    <property type="term" value="F:zinc ion binding"/>
    <property type="evidence" value="ECO:0007669"/>
    <property type="project" value="UniProtKB-UniRule"/>
</dbReference>
<dbReference type="GO" id="GO:0000105">
    <property type="term" value="P:L-histidine biosynthetic process"/>
    <property type="evidence" value="ECO:0007669"/>
    <property type="project" value="UniProtKB-UniRule"/>
</dbReference>
<dbReference type="FunFam" id="3.10.20.810:FF:000001">
    <property type="entry name" value="Histidine biosynthesis bifunctional protein HisIE"/>
    <property type="match status" value="1"/>
</dbReference>
<dbReference type="Gene3D" id="3.10.20.810">
    <property type="entry name" value="Phosphoribosyl-AMP cyclohydrolase"/>
    <property type="match status" value="1"/>
</dbReference>
<dbReference type="HAMAP" id="MF_01021">
    <property type="entry name" value="HisI"/>
    <property type="match status" value="1"/>
</dbReference>
<dbReference type="InterPro" id="IPR026660">
    <property type="entry name" value="PRA-CH"/>
</dbReference>
<dbReference type="InterPro" id="IPR002496">
    <property type="entry name" value="PRib_AMP_CycHydrolase_dom"/>
</dbReference>
<dbReference type="InterPro" id="IPR038019">
    <property type="entry name" value="PRib_AMP_CycHydrolase_sf"/>
</dbReference>
<dbReference type="NCBIfam" id="NF000768">
    <property type="entry name" value="PRK00051.1"/>
    <property type="match status" value="1"/>
</dbReference>
<dbReference type="PANTHER" id="PTHR42945">
    <property type="entry name" value="HISTIDINE BIOSYNTHESIS BIFUNCTIONAL PROTEIN"/>
    <property type="match status" value="1"/>
</dbReference>
<dbReference type="PANTHER" id="PTHR42945:SF1">
    <property type="entry name" value="HISTIDINE BIOSYNTHESIS BIFUNCTIONAL PROTEIN HIS7"/>
    <property type="match status" value="1"/>
</dbReference>
<dbReference type="Pfam" id="PF01502">
    <property type="entry name" value="PRA-CH"/>
    <property type="match status" value="1"/>
</dbReference>
<dbReference type="SUPFAM" id="SSF141734">
    <property type="entry name" value="HisI-like"/>
    <property type="match status" value="1"/>
</dbReference>
<keyword id="KW-0028">Amino-acid biosynthesis</keyword>
<keyword id="KW-0963">Cytoplasm</keyword>
<keyword id="KW-0368">Histidine biosynthesis</keyword>
<keyword id="KW-0378">Hydrolase</keyword>
<keyword id="KW-0460">Magnesium</keyword>
<keyword id="KW-0479">Metal-binding</keyword>
<keyword id="KW-1185">Reference proteome</keyword>
<keyword id="KW-0862">Zinc</keyword>
<gene>
    <name evidence="1" type="primary">hisI</name>
    <name type="ordered locus">SPO1684</name>
</gene>
<organism>
    <name type="scientific">Ruegeria pomeroyi (strain ATCC 700808 / DSM 15171 / DSS-3)</name>
    <name type="common">Silicibacter pomeroyi</name>
    <dbReference type="NCBI Taxonomy" id="246200"/>
    <lineage>
        <taxon>Bacteria</taxon>
        <taxon>Pseudomonadati</taxon>
        <taxon>Pseudomonadota</taxon>
        <taxon>Alphaproteobacteria</taxon>
        <taxon>Rhodobacterales</taxon>
        <taxon>Roseobacteraceae</taxon>
        <taxon>Ruegeria</taxon>
    </lineage>
</organism>
<accession>Q5LST2</accession>
<evidence type="ECO:0000255" key="1">
    <source>
        <dbReference type="HAMAP-Rule" id="MF_01021"/>
    </source>
</evidence>
<protein>
    <recommendedName>
        <fullName evidence="1">Phosphoribosyl-AMP cyclohydrolase</fullName>
        <shortName evidence="1">PRA-CH</shortName>
        <ecNumber evidence="1">3.5.4.19</ecNumber>
    </recommendedName>
</protein>
<sequence>MPFDPSTLKYDAAGLIPAIAQDAATGEVLMMAWMNAQAVARTLESGRVTYWSRSRQSFWVKGESSGHVQELVDFRVDCDRDCLLVTVRQTGPACHTNRRSCFYTAVREGEEVELMAPLL</sequence>
<feature type="chain" id="PRO_0000229841" description="Phosphoribosyl-AMP cyclohydrolase">
    <location>
        <begin position="1"/>
        <end position="119"/>
    </location>
</feature>
<feature type="binding site" evidence="1">
    <location>
        <position position="77"/>
    </location>
    <ligand>
        <name>Mg(2+)</name>
        <dbReference type="ChEBI" id="CHEBI:18420"/>
    </ligand>
</feature>
<feature type="binding site" evidence="1">
    <location>
        <position position="78"/>
    </location>
    <ligand>
        <name>Zn(2+)</name>
        <dbReference type="ChEBI" id="CHEBI:29105"/>
        <note>ligand shared between dimeric partners</note>
    </ligand>
</feature>
<feature type="binding site" evidence="1">
    <location>
        <position position="79"/>
    </location>
    <ligand>
        <name>Mg(2+)</name>
        <dbReference type="ChEBI" id="CHEBI:18420"/>
    </ligand>
</feature>
<feature type="binding site" evidence="1">
    <location>
        <position position="81"/>
    </location>
    <ligand>
        <name>Mg(2+)</name>
        <dbReference type="ChEBI" id="CHEBI:18420"/>
    </ligand>
</feature>
<feature type="binding site" evidence="1">
    <location>
        <position position="94"/>
    </location>
    <ligand>
        <name>Zn(2+)</name>
        <dbReference type="ChEBI" id="CHEBI:29105"/>
        <note>ligand shared between dimeric partners</note>
    </ligand>
</feature>
<feature type="binding site" evidence="1">
    <location>
        <position position="101"/>
    </location>
    <ligand>
        <name>Zn(2+)</name>
        <dbReference type="ChEBI" id="CHEBI:29105"/>
        <note>ligand shared between dimeric partners</note>
    </ligand>
</feature>
<proteinExistence type="inferred from homology"/>
<name>HIS3_RUEPO</name>
<reference key="1">
    <citation type="journal article" date="2004" name="Nature">
        <title>Genome sequence of Silicibacter pomeroyi reveals adaptations to the marine environment.</title>
        <authorList>
            <person name="Moran M.A."/>
            <person name="Buchan A."/>
            <person name="Gonzalez J.M."/>
            <person name="Heidelberg J.F."/>
            <person name="Whitman W.B."/>
            <person name="Kiene R.P."/>
            <person name="Henriksen J.R."/>
            <person name="King G.M."/>
            <person name="Belas R."/>
            <person name="Fuqua C."/>
            <person name="Brinkac L.M."/>
            <person name="Lewis M."/>
            <person name="Johri S."/>
            <person name="Weaver B."/>
            <person name="Pai G."/>
            <person name="Eisen J.A."/>
            <person name="Rahe E."/>
            <person name="Sheldon W.M."/>
            <person name="Ye W."/>
            <person name="Miller T.R."/>
            <person name="Carlton J."/>
            <person name="Rasko D.A."/>
            <person name="Paulsen I.T."/>
            <person name="Ren Q."/>
            <person name="Daugherty S.C."/>
            <person name="DeBoy R.T."/>
            <person name="Dodson R.J."/>
            <person name="Durkin A.S."/>
            <person name="Madupu R."/>
            <person name="Nelson W.C."/>
            <person name="Sullivan S.A."/>
            <person name="Rosovitz M.J."/>
            <person name="Haft D.H."/>
            <person name="Selengut J."/>
            <person name="Ward N."/>
        </authorList>
    </citation>
    <scope>NUCLEOTIDE SEQUENCE [LARGE SCALE GENOMIC DNA]</scope>
    <source>
        <strain>ATCC 700808 / DSM 15171 / DSS-3</strain>
    </source>
</reference>
<reference key="2">
    <citation type="journal article" date="2014" name="Stand. Genomic Sci.">
        <title>An updated genome annotation for the model marine bacterium Ruegeria pomeroyi DSS-3.</title>
        <authorList>
            <person name="Rivers A.R."/>
            <person name="Smith C.B."/>
            <person name="Moran M.A."/>
        </authorList>
    </citation>
    <scope>GENOME REANNOTATION</scope>
    <source>
        <strain>ATCC 700808 / DSM 15171 / DSS-3</strain>
    </source>
</reference>
<comment type="function">
    <text evidence="1">Catalyzes the hydrolysis of the adenine ring of phosphoribosyl-AMP.</text>
</comment>
<comment type="catalytic activity">
    <reaction evidence="1">
        <text>1-(5-phospho-beta-D-ribosyl)-5'-AMP + H2O = 1-(5-phospho-beta-D-ribosyl)-5-[(5-phospho-beta-D-ribosylamino)methylideneamino]imidazole-4-carboxamide</text>
        <dbReference type="Rhea" id="RHEA:20049"/>
        <dbReference type="ChEBI" id="CHEBI:15377"/>
        <dbReference type="ChEBI" id="CHEBI:58435"/>
        <dbReference type="ChEBI" id="CHEBI:59457"/>
        <dbReference type="EC" id="3.5.4.19"/>
    </reaction>
</comment>
<comment type="cofactor">
    <cofactor evidence="1">
        <name>Mg(2+)</name>
        <dbReference type="ChEBI" id="CHEBI:18420"/>
    </cofactor>
    <text evidence="1">Binds 1 Mg(2+) ion per subunit.</text>
</comment>
<comment type="cofactor">
    <cofactor evidence="1">
        <name>Zn(2+)</name>
        <dbReference type="ChEBI" id="CHEBI:29105"/>
    </cofactor>
    <text evidence="1">Binds 1 zinc ion per subunit.</text>
</comment>
<comment type="pathway">
    <text evidence="1">Amino-acid biosynthesis; L-histidine biosynthesis; L-histidine from 5-phospho-alpha-D-ribose 1-diphosphate: step 3/9.</text>
</comment>
<comment type="subunit">
    <text evidence="1">Homodimer.</text>
</comment>
<comment type="subcellular location">
    <subcellularLocation>
        <location evidence="1">Cytoplasm</location>
    </subcellularLocation>
</comment>
<comment type="similarity">
    <text evidence="1">Belongs to the PRA-CH family.</text>
</comment>